<dbReference type="EC" id="2.7.1.1" evidence="5"/>
<dbReference type="EMBL" id="X94302">
    <property type="protein sequence ID" value="CAA63966.1"/>
    <property type="molecule type" value="mRNA"/>
</dbReference>
<dbReference type="PIR" id="T07384">
    <property type="entry name" value="T07384"/>
</dbReference>
<dbReference type="RefSeq" id="NP_001305619.1">
    <property type="nucleotide sequence ID" value="NM_001318690.1"/>
</dbReference>
<dbReference type="SMR" id="O64390"/>
<dbReference type="STRING" id="4113.O64390"/>
<dbReference type="PaxDb" id="4113-PGSC0003DMT400006474"/>
<dbReference type="GeneID" id="102604144"/>
<dbReference type="KEGG" id="sot:102604144"/>
<dbReference type="eggNOG" id="KOG1369">
    <property type="taxonomic scope" value="Eukaryota"/>
</dbReference>
<dbReference type="InParanoid" id="O64390"/>
<dbReference type="OrthoDB" id="419537at2759"/>
<dbReference type="BRENDA" id="2.7.1.1">
    <property type="organism ID" value="5757"/>
</dbReference>
<dbReference type="SABIO-RK" id="O64390"/>
<dbReference type="UniPathway" id="UPA00109">
    <property type="reaction ID" value="UER00180"/>
</dbReference>
<dbReference type="UniPathway" id="UPA00242"/>
<dbReference type="Proteomes" id="UP000011115">
    <property type="component" value="Unassembled WGS sequence"/>
</dbReference>
<dbReference type="ExpressionAtlas" id="O64390">
    <property type="expression patterns" value="baseline"/>
</dbReference>
<dbReference type="GO" id="GO:0009707">
    <property type="term" value="C:chloroplast outer membrane"/>
    <property type="evidence" value="ECO:0007669"/>
    <property type="project" value="UniProtKB-SubCell"/>
</dbReference>
<dbReference type="GO" id="GO:0005829">
    <property type="term" value="C:cytosol"/>
    <property type="evidence" value="ECO:0000318"/>
    <property type="project" value="GO_Central"/>
</dbReference>
<dbReference type="GO" id="GO:0005739">
    <property type="term" value="C:mitochondrion"/>
    <property type="evidence" value="ECO:0000318"/>
    <property type="project" value="GO_Central"/>
</dbReference>
<dbReference type="GO" id="GO:0005524">
    <property type="term" value="F:ATP binding"/>
    <property type="evidence" value="ECO:0007669"/>
    <property type="project" value="UniProtKB-KW"/>
</dbReference>
<dbReference type="GO" id="GO:0005536">
    <property type="term" value="F:D-glucose binding"/>
    <property type="evidence" value="ECO:0007669"/>
    <property type="project" value="InterPro"/>
</dbReference>
<dbReference type="GO" id="GO:0008865">
    <property type="term" value="F:fructokinase activity"/>
    <property type="evidence" value="ECO:0000318"/>
    <property type="project" value="GO_Central"/>
</dbReference>
<dbReference type="GO" id="GO:0004340">
    <property type="term" value="F:glucokinase activity"/>
    <property type="evidence" value="ECO:0000318"/>
    <property type="project" value="GO_Central"/>
</dbReference>
<dbReference type="GO" id="GO:0051156">
    <property type="term" value="P:glucose 6-phosphate metabolic process"/>
    <property type="evidence" value="ECO:0000318"/>
    <property type="project" value="GO_Central"/>
</dbReference>
<dbReference type="GO" id="GO:0006006">
    <property type="term" value="P:glucose metabolic process"/>
    <property type="evidence" value="ECO:0000318"/>
    <property type="project" value="GO_Central"/>
</dbReference>
<dbReference type="GO" id="GO:0006096">
    <property type="term" value="P:glycolytic process"/>
    <property type="evidence" value="ECO:0000318"/>
    <property type="project" value="GO_Central"/>
</dbReference>
<dbReference type="GO" id="GO:0001678">
    <property type="term" value="P:intracellular glucose homeostasis"/>
    <property type="evidence" value="ECO:0000318"/>
    <property type="project" value="GO_Central"/>
</dbReference>
<dbReference type="CDD" id="cd24020">
    <property type="entry name" value="ASKHA_NBD_HK_plant"/>
    <property type="match status" value="1"/>
</dbReference>
<dbReference type="FunFam" id="3.30.420.40:FF:000034">
    <property type="entry name" value="Phosphotransferase"/>
    <property type="match status" value="1"/>
</dbReference>
<dbReference type="FunFam" id="3.40.367.20:FF:000003">
    <property type="entry name" value="Phosphotransferase"/>
    <property type="match status" value="1"/>
</dbReference>
<dbReference type="Gene3D" id="3.30.420.40">
    <property type="match status" value="1"/>
</dbReference>
<dbReference type="Gene3D" id="3.40.367.20">
    <property type="match status" value="1"/>
</dbReference>
<dbReference type="InterPro" id="IPR043129">
    <property type="entry name" value="ATPase_NBD"/>
</dbReference>
<dbReference type="InterPro" id="IPR001312">
    <property type="entry name" value="Hexokinase"/>
</dbReference>
<dbReference type="InterPro" id="IPR022673">
    <property type="entry name" value="Hexokinase_C"/>
</dbReference>
<dbReference type="InterPro" id="IPR022672">
    <property type="entry name" value="Hexokinase_N"/>
</dbReference>
<dbReference type="PANTHER" id="PTHR19443">
    <property type="entry name" value="HEXOKINASE"/>
    <property type="match status" value="1"/>
</dbReference>
<dbReference type="PANTHER" id="PTHR19443:SF85">
    <property type="entry name" value="HEXOKINASE-1"/>
    <property type="match status" value="1"/>
</dbReference>
<dbReference type="Pfam" id="PF00349">
    <property type="entry name" value="Hexokinase_1"/>
    <property type="match status" value="1"/>
</dbReference>
<dbReference type="Pfam" id="PF03727">
    <property type="entry name" value="Hexokinase_2"/>
    <property type="match status" value="1"/>
</dbReference>
<dbReference type="PRINTS" id="PR00475">
    <property type="entry name" value="HEXOKINASE"/>
</dbReference>
<dbReference type="SUPFAM" id="SSF53067">
    <property type="entry name" value="Actin-like ATPase domain"/>
    <property type="match status" value="2"/>
</dbReference>
<dbReference type="PROSITE" id="PS51748">
    <property type="entry name" value="HEXOKINASE_2"/>
    <property type="match status" value="1"/>
</dbReference>
<protein>
    <recommendedName>
        <fullName>Hexokinase-1</fullName>
        <ecNumber evidence="5">2.7.1.1</ecNumber>
    </recommendedName>
    <alternativeName>
        <fullName>StHK1</fullName>
    </alternativeName>
</protein>
<sequence length="498" mass="54130">MKKVTVGAAVVGAAAVCAVAALIVNHRMRKSSKWGRAMAILREFEEKCKTQDAKLKQVADAMTVEMHAGLASEGGQSSRCLSPMSIISQLVMKLGVFYALDLGGTNFRVLRVQLGGKDGGIIHQEFAEASIPPSLMVGTSDALFDYIAAELAKFVAAEEEKFHQPPGKQRELGFHLLIPSNADFNNSGTIMRWTKGFSIDDAVGQDVVGELTKAMKEKVLDMRVSALVNDTVGTLAGGKYTQKDVAVAVILGTGTNAAYVERVQAIPKWHGPVPKSGEMVINMEWGNFRSSHLPLTEYDHALDNESLNPAEQIFEKMTSGMYLGEILRRVLTRVAEEVLAFLAMRSLQSLKDSFVLRTPDMSAMHHDTSPDLKVVGEKLKDILEISNTSLKTRKLVLSLCNIVATRGARLDAAGVLGILKKMGRDTPKQGGSERTVIAMDGGLYEHYTEYRMCLENSLKDLLGEELATSIVFVHSNDGSGIGAALLRASHSMYLEDQA</sequence>
<proteinExistence type="evidence at protein level"/>
<feature type="chain" id="PRO_0000197615" description="Hexokinase-1">
    <location>
        <begin position="1"/>
        <end position="498"/>
    </location>
</feature>
<feature type="transmembrane region" description="Helical" evidence="3">
    <location>
        <begin position="4"/>
        <end position="24"/>
    </location>
</feature>
<feature type="domain" description="Hexokinase" evidence="4">
    <location>
        <begin position="35"/>
        <end position="488"/>
    </location>
</feature>
<feature type="region of interest" description="Hexokinase small subdomain" evidence="4">
    <location>
        <begin position="89"/>
        <end position="228"/>
    </location>
</feature>
<feature type="region of interest" description="Hexokinase large subdomain" evidence="4">
    <location>
        <begin position="229"/>
        <end position="477"/>
    </location>
</feature>
<feature type="binding site" evidence="2">
    <location>
        <position position="104"/>
    </location>
    <ligand>
        <name>ADP</name>
        <dbReference type="ChEBI" id="CHEBI:456216"/>
    </ligand>
</feature>
<feature type="binding site" evidence="2">
    <location>
        <position position="105"/>
    </location>
    <ligand>
        <name>ADP</name>
        <dbReference type="ChEBI" id="CHEBI:456216"/>
    </ligand>
</feature>
<feature type="binding site" evidence="2">
    <location>
        <position position="106"/>
    </location>
    <ligand>
        <name>ADP</name>
        <dbReference type="ChEBI" id="CHEBI:456216"/>
    </ligand>
</feature>
<feature type="binding site" evidence="2">
    <location>
        <position position="194"/>
    </location>
    <ligand>
        <name>D-glucose</name>
        <dbReference type="ChEBI" id="CHEBI:4167"/>
    </ligand>
</feature>
<feature type="binding site" evidence="2">
    <location>
        <position position="195"/>
    </location>
    <ligand>
        <name>D-glucose</name>
        <dbReference type="ChEBI" id="CHEBI:4167"/>
    </ligand>
</feature>
<feature type="binding site" evidence="2">
    <location>
        <position position="229"/>
    </location>
    <ligand>
        <name>D-glucose</name>
        <dbReference type="ChEBI" id="CHEBI:4167"/>
    </ligand>
</feature>
<feature type="binding site" evidence="2">
    <location>
        <position position="230"/>
    </location>
    <ligand>
        <name>D-glucose</name>
        <dbReference type="ChEBI" id="CHEBI:4167"/>
    </ligand>
</feature>
<feature type="binding site" evidence="2">
    <location>
        <position position="253"/>
    </location>
    <ligand>
        <name>ADP</name>
        <dbReference type="ChEBI" id="CHEBI:456216"/>
    </ligand>
</feature>
<feature type="binding site" evidence="2">
    <location>
        <position position="256"/>
    </location>
    <ligand>
        <name>D-glucose</name>
        <dbReference type="ChEBI" id="CHEBI:4167"/>
    </ligand>
</feature>
<feature type="binding site" evidence="2">
    <location>
        <position position="284"/>
    </location>
    <ligand>
        <name>D-glucose</name>
        <dbReference type="ChEBI" id="CHEBI:4167"/>
    </ligand>
</feature>
<feature type="binding site" evidence="2">
    <location>
        <position position="315"/>
    </location>
    <ligand>
        <name>D-glucose</name>
        <dbReference type="ChEBI" id="CHEBI:4167"/>
    </ligand>
</feature>
<feature type="binding site" evidence="2">
    <location>
        <position position="442"/>
    </location>
    <ligand>
        <name>ADP</name>
        <dbReference type="ChEBI" id="CHEBI:456216"/>
    </ligand>
</feature>
<keyword id="KW-0067">ATP-binding</keyword>
<keyword id="KW-0150">Chloroplast</keyword>
<keyword id="KW-0324">Glycolysis</keyword>
<keyword id="KW-0418">Kinase</keyword>
<keyword id="KW-0472">Membrane</keyword>
<keyword id="KW-0547">Nucleotide-binding</keyword>
<keyword id="KW-0934">Plastid</keyword>
<keyword id="KW-1002">Plastid outer membrane</keyword>
<keyword id="KW-1185">Reference proteome</keyword>
<keyword id="KW-0808">Transferase</keyword>
<keyword id="KW-0812">Transmembrane</keyword>
<keyword id="KW-1133">Transmembrane helix</keyword>
<evidence type="ECO:0000250" key="1"/>
<evidence type="ECO:0000250" key="2">
    <source>
        <dbReference type="UniProtKB" id="Q8LQ68"/>
    </source>
</evidence>
<evidence type="ECO:0000255" key="3"/>
<evidence type="ECO:0000255" key="4">
    <source>
        <dbReference type="PROSITE-ProRule" id="PRU01084"/>
    </source>
</evidence>
<evidence type="ECO:0000269" key="5">
    <source>
    </source>
</evidence>
<evidence type="ECO:0000305" key="6"/>
<evidence type="ECO:0000305" key="7">
    <source>
    </source>
</evidence>
<gene>
    <name type="primary">HXK1</name>
    <name type="synonym">HXK</name>
</gene>
<organism>
    <name type="scientific">Solanum tuberosum</name>
    <name type="common">Potato</name>
    <dbReference type="NCBI Taxonomy" id="4113"/>
    <lineage>
        <taxon>Eukaryota</taxon>
        <taxon>Viridiplantae</taxon>
        <taxon>Streptophyta</taxon>
        <taxon>Embryophyta</taxon>
        <taxon>Tracheophyta</taxon>
        <taxon>Spermatophyta</taxon>
        <taxon>Magnoliopsida</taxon>
        <taxon>eudicotyledons</taxon>
        <taxon>Gunneridae</taxon>
        <taxon>Pentapetalae</taxon>
        <taxon>asterids</taxon>
        <taxon>lamiids</taxon>
        <taxon>Solanales</taxon>
        <taxon>Solanaceae</taxon>
        <taxon>Solanoideae</taxon>
        <taxon>Solaneae</taxon>
        <taxon>Solanum</taxon>
    </lineage>
</organism>
<reference key="1">
    <citation type="submission" date="1995-12" db="EMBL/GenBank/DDBJ databases">
        <authorList>
            <person name="Clericus M."/>
            <person name="Heins L."/>
            <person name="Schmitz U.K."/>
        </authorList>
    </citation>
    <scope>NUCLEOTIDE SEQUENCE [MRNA]</scope>
    <source>
        <strain>cv. Desiree</strain>
        <tissue>Leaf</tissue>
    </source>
</reference>
<reference key="2">
    <citation type="journal article" date="1999" name="Plant Physiol.">
        <title>Antisense repression of hexokinase 1 leads to an overaccumulation of starch in leaves of transgenic potato plants but not to significant changes in tuber carbohydrate metabolism.</title>
        <authorList>
            <person name="Veramendi J."/>
            <person name="Roessner U."/>
            <person name="Renz A."/>
            <person name="Willmitzer L."/>
            <person name="Trethewey R.N."/>
        </authorList>
    </citation>
    <scope>FUNCTION</scope>
    <scope>CATALYTIC ACTIVITY</scope>
    <scope>BIOPHYSICOCHEMICAL PROPERTIES</scope>
    <scope>TISSUE SPECIFICITY</scope>
</reference>
<accession>O64390</accession>
<name>HXK1_SOLTU</name>
<comment type="function">
    <text evidence="5">Fructose and glucose phosphorylating enzyme. May be involved in the phosphorylation of glucose during the export from plastids to cytosol. Seems neither to be involved in cell sugar sensing nor in carbohydrate metabolism in tuber.</text>
</comment>
<comment type="catalytic activity">
    <reaction>
        <text>a D-hexose + ATP = a D-hexose 6-phosphate + ADP + H(+)</text>
        <dbReference type="Rhea" id="RHEA:22740"/>
        <dbReference type="ChEBI" id="CHEBI:4194"/>
        <dbReference type="ChEBI" id="CHEBI:15378"/>
        <dbReference type="ChEBI" id="CHEBI:30616"/>
        <dbReference type="ChEBI" id="CHEBI:229467"/>
        <dbReference type="ChEBI" id="CHEBI:456216"/>
        <dbReference type="EC" id="2.7.1.1"/>
    </reaction>
    <physiologicalReaction direction="left-to-right" evidence="5">
        <dbReference type="Rhea" id="RHEA:22741"/>
    </physiologicalReaction>
</comment>
<comment type="catalytic activity">
    <reaction evidence="5">
        <text>D-fructose + ATP = D-fructose 6-phosphate + ADP + H(+)</text>
        <dbReference type="Rhea" id="RHEA:16125"/>
        <dbReference type="ChEBI" id="CHEBI:15378"/>
        <dbReference type="ChEBI" id="CHEBI:30616"/>
        <dbReference type="ChEBI" id="CHEBI:37721"/>
        <dbReference type="ChEBI" id="CHEBI:61527"/>
        <dbReference type="ChEBI" id="CHEBI:456216"/>
        <dbReference type="EC" id="2.7.1.1"/>
    </reaction>
    <physiologicalReaction direction="left-to-right" evidence="5">
        <dbReference type="Rhea" id="RHEA:16126"/>
    </physiologicalReaction>
</comment>
<comment type="catalytic activity">
    <reaction evidence="5">
        <text>D-glucose + ATP = D-glucose 6-phosphate + ADP + H(+)</text>
        <dbReference type="Rhea" id="RHEA:17825"/>
        <dbReference type="ChEBI" id="CHEBI:4167"/>
        <dbReference type="ChEBI" id="CHEBI:15378"/>
        <dbReference type="ChEBI" id="CHEBI:30616"/>
        <dbReference type="ChEBI" id="CHEBI:61548"/>
        <dbReference type="ChEBI" id="CHEBI:456216"/>
        <dbReference type="EC" id="2.7.1.1"/>
    </reaction>
    <physiologicalReaction direction="left-to-right" evidence="5">
        <dbReference type="Rhea" id="RHEA:17826"/>
    </physiologicalReaction>
</comment>
<comment type="biophysicochemical properties">
    <kinetics>
        <KM evidence="5">0.033 mM for glucose</KM>
        <KM evidence="5">1.47 mM for fructose</KM>
        <KM evidence="5">0.029 mM for mannose</KM>
        <Vmax evidence="5">349.0 nmol/min/mg enzyme with glucose as substrate</Vmax>
        <Vmax evidence="5">523.0 nmol/min/mg enzyme with fructose as substrate</Vmax>
        <Vmax evidence="5">221.0 nmol/min/mg enzyme with mannose as substrate</Vmax>
        <text>Measured in yeast lacking glucose and hexose kinase activity.</text>
    </kinetics>
</comment>
<comment type="pathway">
    <text evidence="7">Carbohydrate metabolism; hexose metabolism.</text>
</comment>
<comment type="pathway">
    <text evidence="7">Carbohydrate degradation; glycolysis; D-glyceraldehyde 3-phosphate and glycerone phosphate from D-glucose: step 1/4.</text>
</comment>
<comment type="subcellular location">
    <subcellularLocation>
        <location evidence="1">Plastid</location>
        <location evidence="1">Chloroplast outer membrane</location>
        <topology evidence="1">Single-pass membrane protein</topology>
    </subcellularLocation>
</comment>
<comment type="tissue specificity">
    <text evidence="5">Expressed in young and mature leaves, stems, roots, stolons, and developing and mature tubers.</text>
</comment>
<comment type="similarity">
    <text evidence="4 6">Belongs to the hexokinase family.</text>
</comment>